<protein>
    <recommendedName>
        <fullName evidence="4">Neurotrophic factor BDNF precursor form</fullName>
        <shortName>proBDNF</shortName>
    </recommendedName>
    <alternativeName>
        <fullName>Brain-derived neurotrophic factor</fullName>
    </alternativeName>
    <component>
        <recommendedName>
            <fullName>Neurotrophic factor BDNF</fullName>
        </recommendedName>
    </component>
</protein>
<sequence length="246" mass="27715">MTILFLTMVISYFSCMKAAPMKEASVRGHGSLAYPGLRTHGTLESLTGPNAGSRGLTSLADTFEHVIEELLDEDQDIQPSEENKDADLYTSRVMLSSQVPLEPPLLFLLEEYKNYLDAANMSMRVRRHSDPARRGELSVCDSTSEWVTAAEKKTAVDMSGATVTVLEKVPVPKGQLKQYFYETKCNPKGYTKEGCRGIDKRHWNSQCRTTQSYVRALTMDNKKRVGWRFIRIDTSCVCTLTIKRGR</sequence>
<proteinExistence type="evidence at transcript level"/>
<keyword id="KW-0165">Cleavage on pair of basic residues</keyword>
<keyword id="KW-1015">Disulfide bond</keyword>
<keyword id="KW-0325">Glycoprotein</keyword>
<keyword id="KW-0339">Growth factor</keyword>
<keyword id="KW-1185">Reference proteome</keyword>
<keyword id="KW-0964">Secreted</keyword>
<keyword id="KW-0732">Signal</keyword>
<name>BDNF_CHICK</name>
<organism>
    <name type="scientific">Gallus gallus</name>
    <name type="common">Chicken</name>
    <dbReference type="NCBI Taxonomy" id="9031"/>
    <lineage>
        <taxon>Eukaryota</taxon>
        <taxon>Metazoa</taxon>
        <taxon>Chordata</taxon>
        <taxon>Craniata</taxon>
        <taxon>Vertebrata</taxon>
        <taxon>Euteleostomi</taxon>
        <taxon>Archelosauria</taxon>
        <taxon>Archosauria</taxon>
        <taxon>Dinosauria</taxon>
        <taxon>Saurischia</taxon>
        <taxon>Theropoda</taxon>
        <taxon>Coelurosauria</taxon>
        <taxon>Aves</taxon>
        <taxon>Neognathae</taxon>
        <taxon>Galloanserae</taxon>
        <taxon>Galliformes</taxon>
        <taxon>Phasianidae</taxon>
        <taxon>Phasianinae</taxon>
        <taxon>Gallus</taxon>
    </lineage>
</organism>
<reference key="1">
    <citation type="journal article" date="1992" name="DNA Seq.">
        <title>Gene sequences of chicken BDNF and NT-3.</title>
        <authorList>
            <person name="Maisonpierre P."/>
            <person name="Belluscio L."/>
            <person name="Conover J.C."/>
            <person name="Yancopoulos G.D."/>
        </authorList>
    </citation>
    <scope>NUCLEOTIDE SEQUENCE [GENOMIC DNA]</scope>
    <source>
        <strain>Leghorn</strain>
        <tissue>Liver</tissue>
    </source>
</reference>
<reference key="2">
    <citation type="journal article" date="2006" name="J. Neurosci.">
        <title>Brain-derived neurotrophic factor is critically involved in thermal-experience-dependent developmental plasticity.</title>
        <authorList>
            <person name="Katz A."/>
            <person name="Meiri N."/>
        </authorList>
    </citation>
    <scope>NUCLEOTIDE SEQUENCE [MRNA]</scope>
</reference>
<reference key="3">
    <citation type="journal article" date="1991" name="FEBS Lett.">
        <title>Comparison of mammalian, chicken and Xenopus brain-derived neurotrophic factor coding sequences.</title>
        <authorList>
            <person name="Isackson P.J."/>
            <person name="Towner M.D."/>
            <person name="Huntsman M.M."/>
        </authorList>
    </citation>
    <scope>NUCLEOTIDE SEQUENCE OF 127-240</scope>
</reference>
<reference key="4">
    <citation type="journal article" date="1991" name="Neuron">
        <title>Evolutionary studies of the nerve growth factor family reveal a novel member abundantly expressed in Xenopus ovary.</title>
        <authorList>
            <person name="Hallboeoek F."/>
            <person name="Ibanez C.F."/>
            <person name="Persson H."/>
        </authorList>
    </citation>
    <scope>NUCLEOTIDE SEQUENCE [MRNA] OF 184-226</scope>
</reference>
<gene>
    <name type="primary">BDNF</name>
</gene>
<comment type="function">
    <text evidence="1 2">Important signaling molecule that activates signaling cascades downstream of NTRK2 (By similarity). During development, promotes the survival and differentiation of selected neuronal populations of the peripheral and central nervous systems. Participates in axonal growth, pathfinding and in the modulation of dendritic growth and morphology. Major regulator of synaptic transmission and plasticity at adult synapses in many regions of the CNS. The versatility of BDNF is emphasized by its contribution to a range of adaptive neuronal responses including long-term potentiation (LTP), long-term depression (LTD), certain forms of short-term synaptic plasticity, as well as homeostatic regulation of intrinsic neuronal excitability (By similarity).</text>
</comment>
<comment type="subcellular location">
    <subcellularLocation>
        <location evidence="2">Secreted</location>
    </subcellularLocation>
</comment>
<comment type="similarity">
    <text evidence="4">Belongs to the NGF-beta family.</text>
</comment>
<feature type="signal peptide" evidence="3">
    <location>
        <begin position="1"/>
        <end position="18"/>
    </location>
</feature>
<feature type="propeptide" id="PRO_0000019649">
    <location>
        <begin position="19"/>
        <end position="127"/>
    </location>
</feature>
<feature type="chain" id="PRO_0000019650" description="Neurotrophic factor BDNF">
    <location>
        <begin position="128"/>
        <end position="246"/>
    </location>
</feature>
<feature type="glycosylation site" description="N-linked (GlcNAc...) asparagine" evidence="3">
    <location>
        <position position="120"/>
    </location>
</feature>
<feature type="disulfide bond" evidence="2">
    <location>
        <begin position="140"/>
        <end position="207"/>
    </location>
</feature>
<feature type="disulfide bond" evidence="2">
    <location>
        <begin position="185"/>
        <end position="236"/>
    </location>
</feature>
<feature type="disulfide bond" evidence="2">
    <location>
        <begin position="195"/>
        <end position="238"/>
    </location>
</feature>
<dbReference type="EMBL" id="M83377">
    <property type="protein sequence ID" value="AAC42220.1"/>
    <property type="molecule type" value="Genomic_DNA"/>
</dbReference>
<dbReference type="EMBL" id="DQ124361">
    <property type="protein sequence ID" value="AAZ31074.1"/>
    <property type="molecule type" value="mRNA"/>
</dbReference>
<dbReference type="EMBL" id="X61476">
    <property type="protein sequence ID" value="CAA43704.1"/>
    <property type="molecule type" value="mRNA"/>
</dbReference>
<dbReference type="PIR" id="I50606">
    <property type="entry name" value="I50606"/>
</dbReference>
<dbReference type="RefSeq" id="NP_001026787.1">
    <property type="nucleotide sequence ID" value="NM_001031616.2"/>
</dbReference>
<dbReference type="RefSeq" id="NP_001384996.1">
    <property type="nucleotide sequence ID" value="NM_001398067.1"/>
</dbReference>
<dbReference type="RefSeq" id="NP_001384997.1">
    <property type="nucleotide sequence ID" value="NM_001398068.1"/>
</dbReference>
<dbReference type="RefSeq" id="NP_001384998.1">
    <property type="nucleotide sequence ID" value="NM_001398069.1"/>
</dbReference>
<dbReference type="RefSeq" id="XP_015141637.1">
    <property type="nucleotide sequence ID" value="XM_015286151.1"/>
</dbReference>
<dbReference type="RefSeq" id="XP_015141638.1">
    <property type="nucleotide sequence ID" value="XM_015286152.1"/>
</dbReference>
<dbReference type="RefSeq" id="XP_015141639.1">
    <property type="nucleotide sequence ID" value="XM_015286153.4"/>
</dbReference>
<dbReference type="RefSeq" id="XP_015141640.1">
    <property type="nucleotide sequence ID" value="XM_015286154.1"/>
</dbReference>
<dbReference type="RefSeq" id="XP_046773853.1">
    <property type="nucleotide sequence ID" value="XM_046917897.1"/>
</dbReference>
<dbReference type="SMR" id="P25429"/>
<dbReference type="FunCoup" id="P25429">
    <property type="interactions" value="445"/>
</dbReference>
<dbReference type="STRING" id="9031.ENSGALP00000071950"/>
<dbReference type="GlyCosmos" id="P25429">
    <property type="glycosylation" value="1 site, No reported glycans"/>
</dbReference>
<dbReference type="GlyGen" id="P25429">
    <property type="glycosylation" value="1 site"/>
</dbReference>
<dbReference type="PaxDb" id="9031-ENSGALP00000019837"/>
<dbReference type="Ensembl" id="ENSGALT00010048435.1">
    <property type="protein sequence ID" value="ENSGALP00010028556.1"/>
    <property type="gene ID" value="ENSGALG00010020046.1"/>
</dbReference>
<dbReference type="Ensembl" id="ENSGALT00010048443.1">
    <property type="protein sequence ID" value="ENSGALP00010028559.1"/>
    <property type="gene ID" value="ENSGALG00010020046.1"/>
</dbReference>
<dbReference type="Ensembl" id="ENSGALT00010048449.1">
    <property type="protein sequence ID" value="ENSGALP00010028563.1"/>
    <property type="gene ID" value="ENSGALG00010020046.1"/>
</dbReference>
<dbReference type="Ensembl" id="ENSGALT00010048461.1">
    <property type="protein sequence ID" value="ENSGALP00010028573.1"/>
    <property type="gene ID" value="ENSGALG00010020046.1"/>
</dbReference>
<dbReference type="Ensembl" id="ENSGALT00010048462.1">
    <property type="protein sequence ID" value="ENSGALP00010028574.1"/>
    <property type="gene ID" value="ENSGALG00010020046.1"/>
</dbReference>
<dbReference type="Ensembl" id="ENSGALT00010048472.1">
    <property type="protein sequence ID" value="ENSGALP00010028581.1"/>
    <property type="gene ID" value="ENSGALG00010020046.1"/>
</dbReference>
<dbReference type="GeneID" id="396186"/>
<dbReference type="KEGG" id="gga:396186"/>
<dbReference type="CTD" id="627"/>
<dbReference type="VEuPathDB" id="HostDB:geneid_396186"/>
<dbReference type="eggNOG" id="ENOG502QRU8">
    <property type="taxonomic scope" value="Eukaryota"/>
</dbReference>
<dbReference type="GeneTree" id="ENSGT00390000007725"/>
<dbReference type="HOGENOM" id="CLU_059942_0_0_1"/>
<dbReference type="InParanoid" id="P25429"/>
<dbReference type="OrthoDB" id="8959386at2759"/>
<dbReference type="PhylomeDB" id="P25429"/>
<dbReference type="TreeFam" id="TF106463"/>
<dbReference type="Reactome" id="R-GGA-1257604">
    <property type="pathway name" value="PIP3 activates AKT signaling"/>
</dbReference>
<dbReference type="Reactome" id="R-GGA-6811558">
    <property type="pathway name" value="PI5P, PP2A and IER3 Regulate PI3K/AKT Signaling"/>
</dbReference>
<dbReference type="Reactome" id="R-GGA-9026527">
    <property type="pathway name" value="Activated NTRK2 signals through PLCG1"/>
</dbReference>
<dbReference type="Reactome" id="R-GGA-9028731">
    <property type="pathway name" value="Activated NTRK2 signals through FRS2 and FRS3"/>
</dbReference>
<dbReference type="Reactome" id="R-GGA-9032759">
    <property type="pathway name" value="NTRK2 activates RAC1"/>
</dbReference>
<dbReference type="PRO" id="PR:P25429"/>
<dbReference type="Proteomes" id="UP000000539">
    <property type="component" value="Chromosome 5"/>
</dbReference>
<dbReference type="Bgee" id="ENSGALG00000012163">
    <property type="expression patterns" value="Expressed in cerebellum and 6 other cell types or tissues"/>
</dbReference>
<dbReference type="GO" id="GO:0030424">
    <property type="term" value="C:axon"/>
    <property type="evidence" value="ECO:0000318"/>
    <property type="project" value="GO_Central"/>
</dbReference>
<dbReference type="GO" id="GO:0005737">
    <property type="term" value="C:cytoplasm"/>
    <property type="evidence" value="ECO:0000250"/>
    <property type="project" value="UniProtKB"/>
</dbReference>
<dbReference type="GO" id="GO:0030425">
    <property type="term" value="C:dendrite"/>
    <property type="evidence" value="ECO:0000318"/>
    <property type="project" value="GO_Central"/>
</dbReference>
<dbReference type="GO" id="GO:0005615">
    <property type="term" value="C:extracellular space"/>
    <property type="evidence" value="ECO:0000318"/>
    <property type="project" value="GO_Central"/>
</dbReference>
<dbReference type="GO" id="GO:0005634">
    <property type="term" value="C:nucleus"/>
    <property type="evidence" value="ECO:0000314"/>
    <property type="project" value="AgBase"/>
</dbReference>
<dbReference type="GO" id="GO:0048471">
    <property type="term" value="C:perinuclear region of cytoplasm"/>
    <property type="evidence" value="ECO:0000250"/>
    <property type="project" value="UniProtKB"/>
</dbReference>
<dbReference type="GO" id="GO:0008021">
    <property type="term" value="C:synaptic vesicle"/>
    <property type="evidence" value="ECO:0000318"/>
    <property type="project" value="GO_Central"/>
</dbReference>
<dbReference type="GO" id="GO:0008083">
    <property type="term" value="F:growth factor activity"/>
    <property type="evidence" value="ECO:0000318"/>
    <property type="project" value="GO_Central"/>
</dbReference>
<dbReference type="GO" id="GO:0005163">
    <property type="term" value="F:nerve growth factor receptor binding"/>
    <property type="evidence" value="ECO:0000318"/>
    <property type="project" value="GO_Central"/>
</dbReference>
<dbReference type="GO" id="GO:0007169">
    <property type="term" value="P:cell surface receptor protein tyrosine kinase signaling pathway"/>
    <property type="evidence" value="ECO:0000318"/>
    <property type="project" value="GO_Central"/>
</dbReference>
<dbReference type="GO" id="GO:0050804">
    <property type="term" value="P:modulation of chemical synaptic transmission"/>
    <property type="evidence" value="ECO:0000318"/>
    <property type="project" value="GO_Central"/>
</dbReference>
<dbReference type="GO" id="GO:0043524">
    <property type="term" value="P:negative regulation of neuron apoptotic process"/>
    <property type="evidence" value="ECO:0000318"/>
    <property type="project" value="GO_Central"/>
</dbReference>
<dbReference type="GO" id="GO:0021675">
    <property type="term" value="P:nerve development"/>
    <property type="evidence" value="ECO:0000318"/>
    <property type="project" value="GO_Central"/>
</dbReference>
<dbReference type="GO" id="GO:0038180">
    <property type="term" value="P:nerve growth factor signaling pathway"/>
    <property type="evidence" value="ECO:0000318"/>
    <property type="project" value="GO_Central"/>
</dbReference>
<dbReference type="GO" id="GO:0048812">
    <property type="term" value="P:neuron projection morphogenesis"/>
    <property type="evidence" value="ECO:0000318"/>
    <property type="project" value="GO_Central"/>
</dbReference>
<dbReference type="GO" id="GO:0009408">
    <property type="term" value="P:response to heat"/>
    <property type="evidence" value="ECO:0000314"/>
    <property type="project" value="AgBase"/>
</dbReference>
<dbReference type="FunFam" id="2.10.90.10:FF:000002">
    <property type="entry name" value="Brain-derived neurotrophic factor"/>
    <property type="match status" value="1"/>
</dbReference>
<dbReference type="Gene3D" id="2.10.90.10">
    <property type="entry name" value="Cystine-knot cytokines"/>
    <property type="match status" value="1"/>
</dbReference>
<dbReference type="InterPro" id="IPR020430">
    <property type="entry name" value="Brain-der_neurotrophic_factor"/>
</dbReference>
<dbReference type="InterPro" id="IPR029034">
    <property type="entry name" value="Cystine-knot_cytokine"/>
</dbReference>
<dbReference type="InterPro" id="IPR020408">
    <property type="entry name" value="Nerve_growth_factor-like"/>
</dbReference>
<dbReference type="InterPro" id="IPR002072">
    <property type="entry name" value="Nerve_growth_factor-rel"/>
</dbReference>
<dbReference type="InterPro" id="IPR019846">
    <property type="entry name" value="Nerve_growth_factor_CS"/>
</dbReference>
<dbReference type="PANTHER" id="PTHR11589:SF3">
    <property type="entry name" value="BRAIN-DERIVED NEUROTROPHIC FACTOR"/>
    <property type="match status" value="1"/>
</dbReference>
<dbReference type="PANTHER" id="PTHR11589">
    <property type="entry name" value="NERVE GROWTH FACTOR NGF -RELATED"/>
    <property type="match status" value="1"/>
</dbReference>
<dbReference type="Pfam" id="PF00243">
    <property type="entry name" value="NGF"/>
    <property type="match status" value="1"/>
</dbReference>
<dbReference type="PIRSF" id="PIRSF001789">
    <property type="entry name" value="NGF"/>
    <property type="match status" value="1"/>
</dbReference>
<dbReference type="PRINTS" id="PR01912">
    <property type="entry name" value="BDNFACTOR"/>
</dbReference>
<dbReference type="PRINTS" id="PR00268">
    <property type="entry name" value="NGF"/>
</dbReference>
<dbReference type="SMART" id="SM00140">
    <property type="entry name" value="NGF"/>
    <property type="match status" value="1"/>
</dbReference>
<dbReference type="SUPFAM" id="SSF57501">
    <property type="entry name" value="Cystine-knot cytokines"/>
    <property type="match status" value="1"/>
</dbReference>
<dbReference type="PROSITE" id="PS00248">
    <property type="entry name" value="NGF_1"/>
    <property type="match status" value="1"/>
</dbReference>
<dbReference type="PROSITE" id="PS50270">
    <property type="entry name" value="NGF_2"/>
    <property type="match status" value="1"/>
</dbReference>
<accession>P25429</accession>
<accession>Q45N27</accession>
<evidence type="ECO:0000250" key="1">
    <source>
        <dbReference type="UniProtKB" id="P21237"/>
    </source>
</evidence>
<evidence type="ECO:0000250" key="2">
    <source>
        <dbReference type="UniProtKB" id="P23560"/>
    </source>
</evidence>
<evidence type="ECO:0000255" key="3"/>
<evidence type="ECO:0000305" key="4"/>